<evidence type="ECO:0000250" key="1"/>
<evidence type="ECO:0000250" key="2">
    <source>
        <dbReference type="UniProtKB" id="P01303"/>
    </source>
</evidence>
<evidence type="ECO:0000250" key="3">
    <source>
        <dbReference type="UniProtKB" id="P07808"/>
    </source>
</evidence>
<evidence type="ECO:0000256" key="4">
    <source>
        <dbReference type="SAM" id="MobiDB-lite"/>
    </source>
</evidence>
<evidence type="ECO:0000305" key="5"/>
<organism>
    <name type="scientific">Mus musculus</name>
    <name type="common">Mouse</name>
    <dbReference type="NCBI Taxonomy" id="10090"/>
    <lineage>
        <taxon>Eukaryota</taxon>
        <taxon>Metazoa</taxon>
        <taxon>Chordata</taxon>
        <taxon>Craniata</taxon>
        <taxon>Vertebrata</taxon>
        <taxon>Euteleostomi</taxon>
        <taxon>Mammalia</taxon>
        <taxon>Eutheria</taxon>
        <taxon>Euarchontoglires</taxon>
        <taxon>Glires</taxon>
        <taxon>Rodentia</taxon>
        <taxon>Myomorpha</taxon>
        <taxon>Muroidea</taxon>
        <taxon>Muridae</taxon>
        <taxon>Murinae</taxon>
        <taxon>Mus</taxon>
        <taxon>Mus</taxon>
    </lineage>
</organism>
<accession>P57774</accession>
<accession>Q925V2</accession>
<accession>Q9ET27</accession>
<name>NPY_MOUSE</name>
<dbReference type="EMBL" id="AF273768">
    <property type="protein sequence ID" value="AAG00945.1"/>
    <property type="molecule type" value="mRNA"/>
</dbReference>
<dbReference type="EMBL" id="AK002982">
    <property type="protein sequence ID" value="BAB22495.1"/>
    <property type="molecule type" value="mRNA"/>
</dbReference>
<dbReference type="EMBL" id="BC043012">
    <property type="protein sequence ID" value="AAH43012.1"/>
    <property type="molecule type" value="mRNA"/>
</dbReference>
<dbReference type="EMBL" id="AF286198">
    <property type="protein sequence ID" value="AAG01330.1"/>
    <property type="molecule type" value="mRNA"/>
</dbReference>
<dbReference type="EMBL" id="AF286199">
    <property type="protein sequence ID" value="AAG01331.1"/>
    <property type="molecule type" value="mRNA"/>
</dbReference>
<dbReference type="CCDS" id="CCDS39488.1"/>
<dbReference type="RefSeq" id="NP_075945.1">
    <property type="nucleotide sequence ID" value="NM_023456.3"/>
</dbReference>
<dbReference type="BMRB" id="P57774"/>
<dbReference type="BioGRID" id="224929">
    <property type="interactions" value="2"/>
</dbReference>
<dbReference type="FunCoup" id="P57774">
    <property type="interactions" value="603"/>
</dbReference>
<dbReference type="STRING" id="10090.ENSMUSP00000031843"/>
<dbReference type="iPTMnet" id="P57774"/>
<dbReference type="PhosphoSitePlus" id="P57774"/>
<dbReference type="CPTAC" id="non-CPTAC-3487"/>
<dbReference type="PaxDb" id="10090-ENSMUSP00000031843"/>
<dbReference type="PeptideAtlas" id="P57774"/>
<dbReference type="ProteomicsDB" id="253007"/>
<dbReference type="ABCD" id="P57774">
    <property type="antibodies" value="1 sequenced antibody"/>
</dbReference>
<dbReference type="Antibodypedia" id="12195">
    <property type="antibodies" value="589 antibodies from 40 providers"/>
</dbReference>
<dbReference type="DNASU" id="109648"/>
<dbReference type="Ensembl" id="ENSMUST00000031843.7">
    <property type="protein sequence ID" value="ENSMUSP00000031843.7"/>
    <property type="gene ID" value="ENSMUSG00000029819.7"/>
</dbReference>
<dbReference type="GeneID" id="109648"/>
<dbReference type="KEGG" id="mmu:109648"/>
<dbReference type="UCSC" id="uc009bwt.1">
    <property type="organism name" value="mouse"/>
</dbReference>
<dbReference type="AGR" id="MGI:97374"/>
<dbReference type="CTD" id="4852"/>
<dbReference type="MGI" id="MGI:97374">
    <property type="gene designation" value="Npy"/>
</dbReference>
<dbReference type="VEuPathDB" id="HostDB:ENSMUSG00000029819"/>
<dbReference type="eggNOG" id="ENOG502S2BU">
    <property type="taxonomic scope" value="Eukaryota"/>
</dbReference>
<dbReference type="GeneTree" id="ENSGT00940000156475"/>
<dbReference type="HOGENOM" id="CLU_162379_1_0_1"/>
<dbReference type="InParanoid" id="P57774"/>
<dbReference type="OMA" id="YEDPAMW"/>
<dbReference type="OrthoDB" id="9852947at2759"/>
<dbReference type="PhylomeDB" id="P57774"/>
<dbReference type="TreeFam" id="TF332778"/>
<dbReference type="Reactome" id="R-MMU-375276">
    <property type="pathway name" value="Peptide ligand-binding receptors"/>
</dbReference>
<dbReference type="Reactome" id="R-MMU-418594">
    <property type="pathway name" value="G alpha (i) signalling events"/>
</dbReference>
<dbReference type="BioGRID-ORCS" id="109648">
    <property type="hits" value="6 hits in 78 CRISPR screens"/>
</dbReference>
<dbReference type="ChiTaRS" id="Npy">
    <property type="organism name" value="mouse"/>
</dbReference>
<dbReference type="PRO" id="PR:P57774"/>
<dbReference type="Proteomes" id="UP000000589">
    <property type="component" value="Chromosome 6"/>
</dbReference>
<dbReference type="RNAct" id="P57774">
    <property type="molecule type" value="protein"/>
</dbReference>
<dbReference type="Bgee" id="ENSMUSG00000029819">
    <property type="expression patterns" value="Expressed in median eminence of neurohypophysis and 181 other cell types or tissues"/>
</dbReference>
<dbReference type="GO" id="GO:0005737">
    <property type="term" value="C:cytoplasm"/>
    <property type="evidence" value="ECO:0000314"/>
    <property type="project" value="MGI"/>
</dbReference>
<dbReference type="GO" id="GO:0005615">
    <property type="term" value="C:extracellular space"/>
    <property type="evidence" value="ECO:0000250"/>
    <property type="project" value="HGNC-UCL"/>
</dbReference>
<dbReference type="GO" id="GO:0098982">
    <property type="term" value="C:GABA-ergic synapse"/>
    <property type="evidence" value="ECO:0000314"/>
    <property type="project" value="SynGO"/>
</dbReference>
<dbReference type="GO" id="GO:0005794">
    <property type="term" value="C:Golgi apparatus"/>
    <property type="evidence" value="ECO:0007669"/>
    <property type="project" value="Ensembl"/>
</dbReference>
<dbReference type="GO" id="GO:0098992">
    <property type="term" value="C:neuronal dense core vesicle"/>
    <property type="evidence" value="ECO:0000250"/>
    <property type="project" value="UniProtKB"/>
</dbReference>
<dbReference type="GO" id="GO:0043204">
    <property type="term" value="C:perikaryon"/>
    <property type="evidence" value="ECO:0007669"/>
    <property type="project" value="Ensembl"/>
</dbReference>
<dbReference type="GO" id="GO:0048471">
    <property type="term" value="C:perinuclear region of cytoplasm"/>
    <property type="evidence" value="ECO:0007669"/>
    <property type="project" value="Ensembl"/>
</dbReference>
<dbReference type="GO" id="GO:0043195">
    <property type="term" value="C:terminal bouton"/>
    <property type="evidence" value="ECO:0007669"/>
    <property type="project" value="Ensembl"/>
</dbReference>
<dbReference type="GO" id="GO:0001664">
    <property type="term" value="F:G protein-coupled receptor binding"/>
    <property type="evidence" value="ECO:0000314"/>
    <property type="project" value="MGI"/>
</dbReference>
<dbReference type="GO" id="GO:0005179">
    <property type="term" value="F:hormone activity"/>
    <property type="evidence" value="ECO:0007669"/>
    <property type="project" value="InterPro"/>
</dbReference>
<dbReference type="GO" id="GO:0031841">
    <property type="term" value="F:neuropeptide Y receptor binding"/>
    <property type="evidence" value="ECO:0007669"/>
    <property type="project" value="Ensembl"/>
</dbReference>
<dbReference type="GO" id="GO:0008343">
    <property type="term" value="P:adult feeding behavior"/>
    <property type="evidence" value="ECO:0000250"/>
    <property type="project" value="HGNC-UCL"/>
</dbReference>
<dbReference type="GO" id="GO:0021954">
    <property type="term" value="P:central nervous system neuron development"/>
    <property type="evidence" value="ECO:0007669"/>
    <property type="project" value="Ensembl"/>
</dbReference>
<dbReference type="GO" id="GO:0021987">
    <property type="term" value="P:cerebral cortex development"/>
    <property type="evidence" value="ECO:0007669"/>
    <property type="project" value="Ensembl"/>
</dbReference>
<dbReference type="GO" id="GO:0007268">
    <property type="term" value="P:chemical synaptic transmission"/>
    <property type="evidence" value="ECO:0007669"/>
    <property type="project" value="Ensembl"/>
</dbReference>
<dbReference type="GO" id="GO:0042117">
    <property type="term" value="P:monocyte activation"/>
    <property type="evidence" value="ECO:0007669"/>
    <property type="project" value="Ensembl"/>
</dbReference>
<dbReference type="GO" id="GO:0002865">
    <property type="term" value="P:negative regulation of acute inflammatory response to antigenic stimulus"/>
    <property type="evidence" value="ECO:0007669"/>
    <property type="project" value="Ensembl"/>
</dbReference>
<dbReference type="GO" id="GO:0045776">
    <property type="term" value="P:negative regulation of blood pressure"/>
    <property type="evidence" value="ECO:0007669"/>
    <property type="project" value="Ensembl"/>
</dbReference>
<dbReference type="GO" id="GO:0031175">
    <property type="term" value="P:neuron projection development"/>
    <property type="evidence" value="ECO:0007669"/>
    <property type="project" value="Ensembl"/>
</dbReference>
<dbReference type="GO" id="GO:0007218">
    <property type="term" value="P:neuropeptide signaling pathway"/>
    <property type="evidence" value="ECO:0007669"/>
    <property type="project" value="UniProtKB-KW"/>
</dbReference>
<dbReference type="GO" id="GO:0032100">
    <property type="term" value="P:positive regulation of appetite"/>
    <property type="evidence" value="ECO:0000250"/>
    <property type="project" value="HGNC-UCL"/>
</dbReference>
<dbReference type="GO" id="GO:0008284">
    <property type="term" value="P:positive regulation of cell population proliferation"/>
    <property type="evidence" value="ECO:0007669"/>
    <property type="project" value="Ensembl"/>
</dbReference>
<dbReference type="GO" id="GO:0010811">
    <property type="term" value="P:positive regulation of cell-substrate adhesion"/>
    <property type="evidence" value="ECO:0007669"/>
    <property type="project" value="Ensembl"/>
</dbReference>
<dbReference type="GO" id="GO:0045964">
    <property type="term" value="P:positive regulation of dopamine metabolic process"/>
    <property type="evidence" value="ECO:0007669"/>
    <property type="project" value="Ensembl"/>
</dbReference>
<dbReference type="GO" id="GO:1904000">
    <property type="term" value="P:positive regulation of eating behavior"/>
    <property type="evidence" value="ECO:0007669"/>
    <property type="project" value="Ensembl"/>
</dbReference>
<dbReference type="GO" id="GO:0070374">
    <property type="term" value="P:positive regulation of ERK1 and ERK2 cascade"/>
    <property type="evidence" value="ECO:0007669"/>
    <property type="project" value="Ensembl"/>
</dbReference>
<dbReference type="GO" id="GO:1904407">
    <property type="term" value="P:positive regulation of nitric oxide metabolic process"/>
    <property type="evidence" value="ECO:0007669"/>
    <property type="project" value="Ensembl"/>
</dbReference>
<dbReference type="GO" id="GO:0008217">
    <property type="term" value="P:regulation of blood pressure"/>
    <property type="evidence" value="ECO:0000314"/>
    <property type="project" value="MGI"/>
</dbReference>
<dbReference type="GO" id="GO:0032903">
    <property type="term" value="P:regulation of nerve growth factor production"/>
    <property type="evidence" value="ECO:0007669"/>
    <property type="project" value="Ensembl"/>
</dbReference>
<dbReference type="GO" id="GO:0099509">
    <property type="term" value="P:regulation of presynaptic cytosolic calcium ion concentration"/>
    <property type="evidence" value="ECO:0007669"/>
    <property type="project" value="Ensembl"/>
</dbReference>
<dbReference type="GO" id="GO:2000300">
    <property type="term" value="P:regulation of synaptic vesicle exocytosis"/>
    <property type="evidence" value="ECO:0007669"/>
    <property type="project" value="Ensembl"/>
</dbReference>
<dbReference type="GO" id="GO:0048572">
    <property type="term" value="P:short-day photoperiodism"/>
    <property type="evidence" value="ECO:0007669"/>
    <property type="project" value="Ensembl"/>
</dbReference>
<dbReference type="GO" id="GO:0099538">
    <property type="term" value="P:synaptic signaling via neuropeptide"/>
    <property type="evidence" value="ECO:0000314"/>
    <property type="project" value="SynGO"/>
</dbReference>
<dbReference type="CDD" id="cd00126">
    <property type="entry name" value="PAH"/>
    <property type="match status" value="1"/>
</dbReference>
<dbReference type="Gene3D" id="6.10.250.900">
    <property type="match status" value="1"/>
</dbReference>
<dbReference type="InterPro" id="IPR001955">
    <property type="entry name" value="Pancreatic_hormone-like"/>
</dbReference>
<dbReference type="InterPro" id="IPR020392">
    <property type="entry name" value="Pancreatic_hormone-like_CS"/>
</dbReference>
<dbReference type="PANTHER" id="PTHR10533">
    <property type="entry name" value="NEUROPEPTIDE Y/PANCREATIC HORMONE/PEPTIDE YY"/>
    <property type="match status" value="1"/>
</dbReference>
<dbReference type="PANTHER" id="PTHR10533:SF5">
    <property type="entry name" value="PRO-NEUROPEPTIDE Y"/>
    <property type="match status" value="1"/>
</dbReference>
<dbReference type="Pfam" id="PF00159">
    <property type="entry name" value="Hormone_3"/>
    <property type="match status" value="1"/>
</dbReference>
<dbReference type="PRINTS" id="PR00278">
    <property type="entry name" value="PANCHORMONE"/>
</dbReference>
<dbReference type="SMART" id="SM00309">
    <property type="entry name" value="PAH"/>
    <property type="match status" value="1"/>
</dbReference>
<dbReference type="PROSITE" id="PS00265">
    <property type="entry name" value="PANCREATIC_HORMONE_1"/>
    <property type="match status" value="1"/>
</dbReference>
<dbReference type="PROSITE" id="PS50276">
    <property type="entry name" value="PANCREATIC_HORMONE_2"/>
    <property type="match status" value="1"/>
</dbReference>
<keyword id="KW-0027">Amidation</keyword>
<keyword id="KW-0165">Cleavage on pair of basic residues</keyword>
<keyword id="KW-0968">Cytoplasmic vesicle</keyword>
<keyword id="KW-0527">Neuropeptide</keyword>
<keyword id="KW-0597">Phosphoprotein</keyword>
<keyword id="KW-1185">Reference proteome</keyword>
<keyword id="KW-0964">Secreted</keyword>
<keyword id="KW-0732">Signal</keyword>
<reference key="1">
    <citation type="submission" date="2000-05" db="EMBL/GenBank/DDBJ databases">
        <authorList>
            <person name="Hennessey K."/>
            <person name="Chua S. Jr."/>
        </authorList>
    </citation>
    <scope>NUCLEOTIDE SEQUENCE [MRNA]</scope>
    <source>
        <strain>C57BL/6J</strain>
    </source>
</reference>
<reference key="2">
    <citation type="journal article" date="2005" name="Science">
        <title>The transcriptional landscape of the mammalian genome.</title>
        <authorList>
            <person name="Carninci P."/>
            <person name="Kasukawa T."/>
            <person name="Katayama S."/>
            <person name="Gough J."/>
            <person name="Frith M.C."/>
            <person name="Maeda N."/>
            <person name="Oyama R."/>
            <person name="Ravasi T."/>
            <person name="Lenhard B."/>
            <person name="Wells C."/>
            <person name="Kodzius R."/>
            <person name="Shimokawa K."/>
            <person name="Bajic V.B."/>
            <person name="Brenner S.E."/>
            <person name="Batalov S."/>
            <person name="Forrest A.R."/>
            <person name="Zavolan M."/>
            <person name="Davis M.J."/>
            <person name="Wilming L.G."/>
            <person name="Aidinis V."/>
            <person name="Allen J.E."/>
            <person name="Ambesi-Impiombato A."/>
            <person name="Apweiler R."/>
            <person name="Aturaliya R.N."/>
            <person name="Bailey T.L."/>
            <person name="Bansal M."/>
            <person name="Baxter L."/>
            <person name="Beisel K.W."/>
            <person name="Bersano T."/>
            <person name="Bono H."/>
            <person name="Chalk A.M."/>
            <person name="Chiu K.P."/>
            <person name="Choudhary V."/>
            <person name="Christoffels A."/>
            <person name="Clutterbuck D.R."/>
            <person name="Crowe M.L."/>
            <person name="Dalla E."/>
            <person name="Dalrymple B.P."/>
            <person name="de Bono B."/>
            <person name="Della Gatta G."/>
            <person name="di Bernardo D."/>
            <person name="Down T."/>
            <person name="Engstrom P."/>
            <person name="Fagiolini M."/>
            <person name="Faulkner G."/>
            <person name="Fletcher C.F."/>
            <person name="Fukushima T."/>
            <person name="Furuno M."/>
            <person name="Futaki S."/>
            <person name="Gariboldi M."/>
            <person name="Georgii-Hemming P."/>
            <person name="Gingeras T.R."/>
            <person name="Gojobori T."/>
            <person name="Green R.E."/>
            <person name="Gustincich S."/>
            <person name="Harbers M."/>
            <person name="Hayashi Y."/>
            <person name="Hensch T.K."/>
            <person name="Hirokawa N."/>
            <person name="Hill D."/>
            <person name="Huminiecki L."/>
            <person name="Iacono M."/>
            <person name="Ikeo K."/>
            <person name="Iwama A."/>
            <person name="Ishikawa T."/>
            <person name="Jakt M."/>
            <person name="Kanapin A."/>
            <person name="Katoh M."/>
            <person name="Kawasawa Y."/>
            <person name="Kelso J."/>
            <person name="Kitamura H."/>
            <person name="Kitano H."/>
            <person name="Kollias G."/>
            <person name="Krishnan S.P."/>
            <person name="Kruger A."/>
            <person name="Kummerfeld S.K."/>
            <person name="Kurochkin I.V."/>
            <person name="Lareau L.F."/>
            <person name="Lazarevic D."/>
            <person name="Lipovich L."/>
            <person name="Liu J."/>
            <person name="Liuni S."/>
            <person name="McWilliam S."/>
            <person name="Madan Babu M."/>
            <person name="Madera M."/>
            <person name="Marchionni L."/>
            <person name="Matsuda H."/>
            <person name="Matsuzawa S."/>
            <person name="Miki H."/>
            <person name="Mignone F."/>
            <person name="Miyake S."/>
            <person name="Morris K."/>
            <person name="Mottagui-Tabar S."/>
            <person name="Mulder N."/>
            <person name="Nakano N."/>
            <person name="Nakauchi H."/>
            <person name="Ng P."/>
            <person name="Nilsson R."/>
            <person name="Nishiguchi S."/>
            <person name="Nishikawa S."/>
            <person name="Nori F."/>
            <person name="Ohara O."/>
            <person name="Okazaki Y."/>
            <person name="Orlando V."/>
            <person name="Pang K.C."/>
            <person name="Pavan W.J."/>
            <person name="Pavesi G."/>
            <person name="Pesole G."/>
            <person name="Petrovsky N."/>
            <person name="Piazza S."/>
            <person name="Reed J."/>
            <person name="Reid J.F."/>
            <person name="Ring B.Z."/>
            <person name="Ringwald M."/>
            <person name="Rost B."/>
            <person name="Ruan Y."/>
            <person name="Salzberg S.L."/>
            <person name="Sandelin A."/>
            <person name="Schneider C."/>
            <person name="Schoenbach C."/>
            <person name="Sekiguchi K."/>
            <person name="Semple C.A."/>
            <person name="Seno S."/>
            <person name="Sessa L."/>
            <person name="Sheng Y."/>
            <person name="Shibata Y."/>
            <person name="Shimada H."/>
            <person name="Shimada K."/>
            <person name="Silva D."/>
            <person name="Sinclair B."/>
            <person name="Sperling S."/>
            <person name="Stupka E."/>
            <person name="Sugiura K."/>
            <person name="Sultana R."/>
            <person name="Takenaka Y."/>
            <person name="Taki K."/>
            <person name="Tammoja K."/>
            <person name="Tan S.L."/>
            <person name="Tang S."/>
            <person name="Taylor M.S."/>
            <person name="Tegner J."/>
            <person name="Teichmann S.A."/>
            <person name="Ueda H.R."/>
            <person name="van Nimwegen E."/>
            <person name="Verardo R."/>
            <person name="Wei C.L."/>
            <person name="Yagi K."/>
            <person name="Yamanishi H."/>
            <person name="Zabarovsky E."/>
            <person name="Zhu S."/>
            <person name="Zimmer A."/>
            <person name="Hide W."/>
            <person name="Bult C."/>
            <person name="Grimmond S.M."/>
            <person name="Teasdale R.D."/>
            <person name="Liu E.T."/>
            <person name="Brusic V."/>
            <person name="Quackenbush J."/>
            <person name="Wahlestedt C."/>
            <person name="Mattick J.S."/>
            <person name="Hume D.A."/>
            <person name="Kai C."/>
            <person name="Sasaki D."/>
            <person name="Tomaru Y."/>
            <person name="Fukuda S."/>
            <person name="Kanamori-Katayama M."/>
            <person name="Suzuki M."/>
            <person name="Aoki J."/>
            <person name="Arakawa T."/>
            <person name="Iida J."/>
            <person name="Imamura K."/>
            <person name="Itoh M."/>
            <person name="Kato T."/>
            <person name="Kawaji H."/>
            <person name="Kawagashira N."/>
            <person name="Kawashima T."/>
            <person name="Kojima M."/>
            <person name="Kondo S."/>
            <person name="Konno H."/>
            <person name="Nakano K."/>
            <person name="Ninomiya N."/>
            <person name="Nishio T."/>
            <person name="Okada M."/>
            <person name="Plessy C."/>
            <person name="Shibata K."/>
            <person name="Shiraki T."/>
            <person name="Suzuki S."/>
            <person name="Tagami M."/>
            <person name="Waki K."/>
            <person name="Watahiki A."/>
            <person name="Okamura-Oho Y."/>
            <person name="Suzuki H."/>
            <person name="Kawai J."/>
            <person name="Hayashizaki Y."/>
        </authorList>
    </citation>
    <scope>NUCLEOTIDE SEQUENCE [LARGE SCALE MRNA]</scope>
    <source>
        <strain>C57BL/6J</strain>
        <tissue>Brain</tissue>
    </source>
</reference>
<reference key="3">
    <citation type="journal article" date="2004" name="Genome Res.">
        <title>The status, quality, and expansion of the NIH full-length cDNA project: the Mammalian Gene Collection (MGC).</title>
        <authorList>
            <consortium name="The MGC Project Team"/>
        </authorList>
    </citation>
    <scope>NUCLEOTIDE SEQUENCE [LARGE SCALE MRNA]</scope>
    <source>
        <strain>C57BL/6J</strain>
        <tissue>Brain</tissue>
    </source>
</reference>
<reference key="4">
    <citation type="journal article" date="2001" name="Mamm. Genome">
        <title>Multiple obesity QTLs identified in an intercross between the NZO (New Zealand obese) and the SM (small) mouse strains.</title>
        <authorList>
            <person name="Taylor B.A."/>
            <person name="Wnek C."/>
            <person name="Schroeder D."/>
            <person name="Phillips S.J."/>
        </authorList>
    </citation>
    <scope>NUCLEOTIDE SEQUENCE [MRNA] OF 1-89</scope>
    <source>
        <strain>NZO</strain>
        <strain>SM/J</strain>
        <tissue>Brain</tissue>
    </source>
</reference>
<reference key="5">
    <citation type="journal article" date="2006" name="Mol. Cell. Proteomics">
        <title>Comprehensive identification of phosphorylation sites in postsynaptic density preparations.</title>
        <authorList>
            <person name="Trinidad J.C."/>
            <person name="Specht C.G."/>
            <person name="Thalhammer A."/>
            <person name="Schoepfer R."/>
            <person name="Burlingame A.L."/>
        </authorList>
    </citation>
    <scope>IDENTIFICATION BY MASS SPECTROMETRY [LARGE SCALE ANALYSIS]</scope>
    <source>
        <tissue>Brain</tissue>
    </source>
</reference>
<reference key="6">
    <citation type="journal article" date="2010" name="Cell">
        <title>A tissue-specific atlas of mouse protein phosphorylation and expression.</title>
        <authorList>
            <person name="Huttlin E.L."/>
            <person name="Jedrychowski M.P."/>
            <person name="Elias J.E."/>
            <person name="Goswami T."/>
            <person name="Rad R."/>
            <person name="Beausoleil S.A."/>
            <person name="Villen J."/>
            <person name="Haas W."/>
            <person name="Sowa M.E."/>
            <person name="Gygi S.P."/>
        </authorList>
    </citation>
    <scope>IDENTIFICATION BY MASS SPECTROMETRY [LARGE SCALE ANALYSIS]</scope>
    <source>
        <tissue>Brain</tissue>
        <tissue>Brown adipose tissue</tissue>
        <tissue>Liver</tissue>
    </source>
</reference>
<gene>
    <name type="primary">Npy</name>
</gene>
<comment type="function">
    <text evidence="1">NPY is implicated in the control of feeding and in secretion of gonadotrophin-release hormone.</text>
</comment>
<comment type="subcellular location">
    <subcellularLocation>
        <location>Secreted</location>
    </subcellularLocation>
    <subcellularLocation>
        <location evidence="3">Cytoplasmic vesicle</location>
        <location evidence="3">Secretory vesicle</location>
        <location evidence="3">Neuronal dense core vesicle</location>
    </subcellularLocation>
</comment>
<comment type="tissue specificity">
    <text>One of the most abundant peptides in the nervous system. Also found in some chromaffin cells of the adrenal medulla.</text>
</comment>
<comment type="PTM">
    <text evidence="2">The neuropeptide Y form is cleaved at Pro-30 by the prolyl endopeptidase FAP (seprase) activity (in vitro).</text>
</comment>
<comment type="similarity">
    <text evidence="5">Belongs to the NPY family.</text>
</comment>
<sequence>MLGNKRMGLCGLTLALSLLVCLGILAEGYPSKPDNPGEDAPAEDMARYYSALRHYINLITRQRYGKRSSPETLISDLLMKESTENAPRTRLEDPSMW</sequence>
<feature type="signal peptide" evidence="1">
    <location>
        <begin position="1"/>
        <end position="28"/>
    </location>
</feature>
<feature type="peptide" id="PRO_0000025325" description="Neuropeptide Y">
    <location>
        <begin position="29"/>
        <end position="64"/>
    </location>
</feature>
<feature type="peptide" id="PRO_0000025326" description="C-flanking peptide of NPY">
    <location>
        <begin position="68"/>
        <end position="97"/>
    </location>
</feature>
<feature type="region of interest" description="Disordered" evidence="4">
    <location>
        <begin position="75"/>
        <end position="97"/>
    </location>
</feature>
<feature type="compositionally biased region" description="Basic and acidic residues" evidence="4">
    <location>
        <begin position="78"/>
        <end position="97"/>
    </location>
</feature>
<feature type="site" description="Cleavage; by FAP" evidence="2">
    <location>
        <begin position="30"/>
        <end position="31"/>
    </location>
</feature>
<feature type="modified residue" description="Tyrosine amide" evidence="1">
    <location>
        <position position="64"/>
    </location>
</feature>
<feature type="modified residue" description="Phosphothreonine" evidence="2">
    <location>
        <position position="83"/>
    </location>
</feature>
<feature type="sequence conflict" description="In Ref. 4; AAG01330/AAG01331." evidence="5" ref="4">
    <original>A</original>
    <variation>R</variation>
    <location>
        <position position="42"/>
    </location>
</feature>
<protein>
    <recommendedName>
        <fullName>Pro-neuropeptide Y</fullName>
    </recommendedName>
    <component>
        <recommendedName>
            <fullName>Neuropeptide Y</fullName>
        </recommendedName>
        <alternativeName>
            <fullName>Neuropeptide tyrosine</fullName>
            <shortName>NPY</shortName>
        </alternativeName>
    </component>
    <component>
        <recommendedName>
            <fullName>C-flanking peptide of NPY</fullName>
            <shortName>CPON</shortName>
        </recommendedName>
    </component>
</protein>
<proteinExistence type="evidence at protein level"/>